<dbReference type="EMBL" id="DQ317523">
    <property type="protein sequence ID" value="ABC25119.1"/>
    <property type="molecule type" value="Genomic_DNA"/>
</dbReference>
<dbReference type="RefSeq" id="YP_538759.1">
    <property type="nucleotide sequence ID" value="NC_007942.1"/>
</dbReference>
<dbReference type="SMR" id="Q2PMT9"/>
<dbReference type="FunCoup" id="Q2PMT9">
    <property type="interactions" value="665"/>
</dbReference>
<dbReference type="STRING" id="3847.Q2PMT9"/>
<dbReference type="GeneID" id="3989283"/>
<dbReference type="KEGG" id="gmx:3989283"/>
<dbReference type="InParanoid" id="Q2PMT9"/>
<dbReference type="Proteomes" id="UP000008827">
    <property type="component" value="Chloroplast"/>
</dbReference>
<dbReference type="GO" id="GO:0009535">
    <property type="term" value="C:chloroplast thylakoid membrane"/>
    <property type="evidence" value="ECO:0007669"/>
    <property type="project" value="UniProtKB-SubCell"/>
</dbReference>
<dbReference type="GO" id="GO:0009523">
    <property type="term" value="C:photosystem II"/>
    <property type="evidence" value="ECO:0007669"/>
    <property type="project" value="UniProtKB-KW"/>
</dbReference>
<dbReference type="GO" id="GO:0016168">
    <property type="term" value="F:chlorophyll binding"/>
    <property type="evidence" value="ECO:0007669"/>
    <property type="project" value="UniProtKB-UniRule"/>
</dbReference>
<dbReference type="GO" id="GO:0045156">
    <property type="term" value="F:electron transporter, transferring electrons within the cyclic electron transport pathway of photosynthesis activity"/>
    <property type="evidence" value="ECO:0007669"/>
    <property type="project" value="InterPro"/>
</dbReference>
<dbReference type="GO" id="GO:0046872">
    <property type="term" value="F:metal ion binding"/>
    <property type="evidence" value="ECO:0007669"/>
    <property type="project" value="UniProtKB-KW"/>
</dbReference>
<dbReference type="GO" id="GO:0009772">
    <property type="term" value="P:photosynthetic electron transport in photosystem II"/>
    <property type="evidence" value="ECO:0007669"/>
    <property type="project" value="InterPro"/>
</dbReference>
<dbReference type="FunFam" id="1.10.10.670:FF:000001">
    <property type="entry name" value="Photosystem II CP43 reaction center protein"/>
    <property type="match status" value="1"/>
</dbReference>
<dbReference type="Gene3D" id="1.10.10.670">
    <property type="entry name" value="photosystem ii from thermosynechococcus elongatus"/>
    <property type="match status" value="1"/>
</dbReference>
<dbReference type="HAMAP" id="MF_01496">
    <property type="entry name" value="PSII_PsbC_CP43"/>
    <property type="match status" value="1"/>
</dbReference>
<dbReference type="InterPro" id="IPR000932">
    <property type="entry name" value="PS_antenna-like"/>
</dbReference>
<dbReference type="InterPro" id="IPR036001">
    <property type="entry name" value="PS_II_antenna-like_sf"/>
</dbReference>
<dbReference type="InterPro" id="IPR005869">
    <property type="entry name" value="PSII_PsbC"/>
</dbReference>
<dbReference type="InterPro" id="IPR044900">
    <property type="entry name" value="PSII_PsbC_sf"/>
</dbReference>
<dbReference type="NCBIfam" id="TIGR01153">
    <property type="entry name" value="psbC"/>
    <property type="match status" value="1"/>
</dbReference>
<dbReference type="Pfam" id="PF00421">
    <property type="entry name" value="PSII"/>
    <property type="match status" value="1"/>
</dbReference>
<dbReference type="SUPFAM" id="SSF161077">
    <property type="entry name" value="Photosystem II antenna protein-like"/>
    <property type="match status" value="1"/>
</dbReference>
<comment type="function">
    <text evidence="1">One of the components of the core complex of photosystem II (PSII). It binds chlorophyll and helps catalyze the primary light-induced photochemical processes of PSII. PSII is a light-driven water:plastoquinone oxidoreductase, using light energy to abstract electrons from H(2)O, generating O(2) and a proton gradient subsequently used for ATP formation.</text>
</comment>
<comment type="cofactor">
    <text evidence="1">Binds multiple chlorophylls and provides some of the ligands for the Ca-4Mn-5O cluster of the oxygen-evolving complex. It may also provide a ligand for a Cl- that is required for oxygen evolution. PSII binds additional chlorophylls, carotenoids and specific lipids.</text>
</comment>
<comment type="subunit">
    <text evidence="1">PSII is composed of 1 copy each of membrane proteins PsbA, PsbB, PsbC, PsbD, PsbE, PsbF, PsbH, PsbI, PsbJ, PsbK, PsbL, PsbM, PsbT, PsbX, PsbY, PsbZ, Psb30/Ycf12, at least 3 peripheral proteins of the oxygen-evolving complex and a large number of cofactors. It forms dimeric complexes.</text>
</comment>
<comment type="subcellular location">
    <subcellularLocation>
        <location evidence="1">Plastid</location>
        <location evidence="1">Chloroplast thylakoid membrane</location>
        <topology evidence="1">Multi-pass membrane protein</topology>
    </subcellularLocation>
</comment>
<comment type="similarity">
    <text evidence="1">Belongs to the PsbB/PsbC family. PsbC subfamily.</text>
</comment>
<sequence length="473" mass="51920">MKTLYSLRRFYHVETLFNGTLALTGRDQETTGFAWWAGNARLINLSGKLLGAHVAHAGLIVFWAGAMNLFEVAHFVPEKPMYEQGLILLPHLATLGWGVGPGGEVIDTFPYFVSGVLHLISSAVLGFGGIYHALLGPETLEESFPFFGYVWKDRNKMTTILGIHLILLGIGAFLLVFKALYFGGIYDTWAPGGGDVRKITNLTLSPSIIFGYLLKSPFGGEGWIVSVDDLEDIIGGHVWLGSICILGGIWHILTKPFAWARRALVWSGEAYLSYSLGALSVFGFIACCFVWFNNTAYPSEFYGPTGPEASQAQAFTFLVRDQRLGANVGSAQGPTGLGKYLMRSPTGEVIFGGETMRFWDLRAPWLEPLRGPNGLDLSRLKKDIQPWQERRSAEYMTHAPLGSLNSVGGVATEINAVNYVSPRSWLATSHFVLGFFLFVGHLWHAGRARAAAAGFEKGIDRDFEPVLSMTPLN</sequence>
<reference key="1">
    <citation type="journal article" date="2005" name="Plant Mol. Biol.">
        <title>Complete chloroplast genome sequence of Glycine max and comparative analyses with other legume genomes.</title>
        <authorList>
            <person name="Saski C."/>
            <person name="Lee S.-B."/>
            <person name="Daniell H."/>
            <person name="Wood T.C."/>
            <person name="Tomkins J."/>
            <person name="Kim H.-G."/>
            <person name="Jansen R.K."/>
        </authorList>
    </citation>
    <scope>NUCLEOTIDE SEQUENCE [LARGE SCALE GENOMIC DNA]</scope>
    <source>
        <strain>cv. PI 437654</strain>
    </source>
</reference>
<keyword id="KW-0007">Acetylation</keyword>
<keyword id="KW-0148">Chlorophyll</keyword>
<keyword id="KW-0150">Chloroplast</keyword>
<keyword id="KW-0157">Chromophore</keyword>
<keyword id="KW-0464">Manganese</keyword>
<keyword id="KW-0472">Membrane</keyword>
<keyword id="KW-0479">Metal-binding</keyword>
<keyword id="KW-0597">Phosphoprotein</keyword>
<keyword id="KW-0602">Photosynthesis</keyword>
<keyword id="KW-0604">Photosystem II</keyword>
<keyword id="KW-0934">Plastid</keyword>
<keyword id="KW-1185">Reference proteome</keyword>
<keyword id="KW-0793">Thylakoid</keyword>
<keyword id="KW-0812">Transmembrane</keyword>
<keyword id="KW-1133">Transmembrane helix</keyword>
<accession>Q2PMT9</accession>
<geneLocation type="chloroplast"/>
<name>PSBC_SOYBN</name>
<proteinExistence type="inferred from homology"/>
<organism>
    <name type="scientific">Glycine max</name>
    <name type="common">Soybean</name>
    <name type="synonym">Glycine hispida</name>
    <dbReference type="NCBI Taxonomy" id="3847"/>
    <lineage>
        <taxon>Eukaryota</taxon>
        <taxon>Viridiplantae</taxon>
        <taxon>Streptophyta</taxon>
        <taxon>Embryophyta</taxon>
        <taxon>Tracheophyta</taxon>
        <taxon>Spermatophyta</taxon>
        <taxon>Magnoliopsida</taxon>
        <taxon>eudicotyledons</taxon>
        <taxon>Gunneridae</taxon>
        <taxon>Pentapetalae</taxon>
        <taxon>rosids</taxon>
        <taxon>fabids</taxon>
        <taxon>Fabales</taxon>
        <taxon>Fabaceae</taxon>
        <taxon>Papilionoideae</taxon>
        <taxon>50 kb inversion clade</taxon>
        <taxon>NPAAA clade</taxon>
        <taxon>indigoferoid/millettioid clade</taxon>
        <taxon>Phaseoleae</taxon>
        <taxon>Glycine</taxon>
        <taxon>Glycine subgen. Soja</taxon>
    </lineage>
</organism>
<protein>
    <recommendedName>
        <fullName evidence="1">Photosystem II CP43 reaction center protein</fullName>
    </recommendedName>
    <alternativeName>
        <fullName evidence="1">PSII 43 kDa protein</fullName>
    </alternativeName>
    <alternativeName>
        <fullName evidence="1">Protein CP-43</fullName>
    </alternativeName>
</protein>
<feature type="propeptide" id="PRO_0000431145" evidence="1">
    <location>
        <begin position="1"/>
        <end position="14"/>
    </location>
</feature>
<feature type="chain" id="PRO_0000277453" description="Photosystem II CP43 reaction center protein" evidence="1">
    <location>
        <begin position="15"/>
        <end position="473"/>
    </location>
</feature>
<feature type="transmembrane region" description="Helical" evidence="1">
    <location>
        <begin position="69"/>
        <end position="93"/>
    </location>
</feature>
<feature type="transmembrane region" description="Helical" evidence="1">
    <location>
        <begin position="134"/>
        <end position="155"/>
    </location>
</feature>
<feature type="transmembrane region" description="Helical" evidence="1">
    <location>
        <begin position="178"/>
        <end position="200"/>
    </location>
</feature>
<feature type="transmembrane region" description="Helical" evidence="1">
    <location>
        <begin position="255"/>
        <end position="275"/>
    </location>
</feature>
<feature type="transmembrane region" description="Helical" evidence="1">
    <location>
        <begin position="291"/>
        <end position="312"/>
    </location>
</feature>
<feature type="transmembrane region" description="Helical" evidence="1">
    <location>
        <begin position="447"/>
        <end position="471"/>
    </location>
</feature>
<feature type="binding site" evidence="1">
    <location>
        <position position="367"/>
    </location>
    <ligand>
        <name>[CaMn4O5] cluster</name>
        <dbReference type="ChEBI" id="CHEBI:189552"/>
    </ligand>
</feature>
<feature type="modified residue" description="N-acetylthreonine" evidence="1">
    <location>
        <position position="15"/>
    </location>
</feature>
<feature type="modified residue" description="Phosphothreonine" evidence="1">
    <location>
        <position position="15"/>
    </location>
</feature>
<gene>
    <name evidence="1" type="primary">psbC</name>
</gene>
<evidence type="ECO:0000255" key="1">
    <source>
        <dbReference type="HAMAP-Rule" id="MF_01496"/>
    </source>
</evidence>